<accession>Q62720</accession>
<sequence length="507" mass="55143">MGCWGRNRGRLLCMLLLTFMFMVLEVVVSRVTASLAMLSDSFHMLSDVLALVVALVAERFARRTHATQKNTFGWIRAEVMGALVNAIFLTGLCFAILLEAVERFIEPHEMQQPLVVLSVGVAGLLVNVLGLCLFHHHSGEGQGAGHGHSHGHGHGHLAKGARKAGRAGGEAGAPPGRAPDQEPDQEETNTLVANTSNSNGLKADQAEPEKLRSDDPVDVQVNGNLIQESDSLESEDNRAGQLNMRGVFLHVLGDALGSVIVVVNALVFYFSWKGCTEDDFCVNPCFPDPCKSSVELMNSTQAPMHEAGPCWVLYLDPTLCIIMVCILLYTTYPLLKESALILLQTVPKQIDIKHLVKELRDVEGVEEVHELHVWQLAGSRIIATAHIKCEDPASYMQVAKTIKDVFHNHGIHATTIQPEFASVGSKSSVVPCELACRTQCALKQCCGTRPQVHSGKEAEKAPTVSISCLELSENLEKKPRRTKAEGSVPAVVIEIKNVPNKQPESSL</sequence>
<comment type="function">
    <text evidence="2 5 6 7 8 9 10">Zinc ion:proton antiporter that could function at the plasma membrane mediating zinc efflux from cells against its electrochemical gradient protecting them from intracellular zinc accumulation and toxicity (PubMed:19095042, PubMed:24951051, PubMed:7882967). Alternatively, could prevent the transport to the plasma membrane of CACNB2, the L-type calcium channels regulatory subunit, through a yet to be defined mechanism. By modulating the expression of these channels at the plasma membrane, could prevent calcium and zinc influx into cells. By the same mechanism, could also prevent L-type calcium channels-mediated heavy metal influx into cells (PubMed:15378655, PubMed:16741752, PubMed:19767393). In some cells, could also function as a zinc ion:proton antiporter mediating zinc entry into the lumen of cytoplasmic vesicles. In macrophages, can increase zinc ions concentration into the lumen of cytoplasmic vesicles containing engulfed bacteria and could help inactivate them (By similarity). Forms a complex with TMC6/EVER1 and TMC8/EVER2 at the ER membrane of keratynocytes which facilitates zinc uptake into the ER (By similarity). Down-regulates the activity of transcription factors induced by zinc and cytokines (By similarity).</text>
</comment>
<comment type="catalytic activity">
    <reaction evidence="9">
        <text>Zn(2+)(in) + 2 H(+)(out) = Zn(2+)(out) + 2 H(+)(in)</text>
        <dbReference type="Rhea" id="RHEA:72627"/>
        <dbReference type="ChEBI" id="CHEBI:15378"/>
        <dbReference type="ChEBI" id="CHEBI:29105"/>
    </reaction>
</comment>
<comment type="activity regulation">
    <text evidence="9">Calcium-dependent.</text>
</comment>
<comment type="subunit">
    <text evidence="2 16">Homodimer. Interacts with TMEM163 (By similarity). Interacts and forms a complex with TMC6 and TMC8; the interaction regulates zinc transport into the ER (By similarity).</text>
</comment>
<comment type="subcellular location">
    <subcellularLocation>
        <location evidence="9 10">Cell membrane</location>
        <topology evidence="3">Multi-pass membrane protein</topology>
    </subcellularLocation>
    <subcellularLocation>
        <location evidence="9">Basolateral cell membrane</location>
        <topology evidence="3">Multi-pass membrane protein</topology>
    </subcellularLocation>
    <subcellularLocation>
        <location evidence="2">Cytoplasmic vesicle membrane</location>
        <topology evidence="3">Multi-pass membrane protein</topology>
    </subcellularLocation>
    <subcellularLocation>
        <location evidence="2">Cytoplasm</location>
    </subcellularLocation>
    <subcellularLocation>
        <location evidence="2">Endoplasmic reticulum membrane</location>
        <topology evidence="3">Multi-pass membrane protein</topology>
    </subcellularLocation>
    <subcellularLocation>
        <location evidence="2">Golgi apparatus membrane</location>
        <topology evidence="3">Multi-pass membrane protein</topology>
    </subcellularLocation>
    <subcellularLocation>
        <location evidence="2">Nucleus membrane</location>
        <topology evidence="3">Multi-pass membrane protein</topology>
    </subcellularLocation>
    <text evidence="2 9">Localization to the plasma membrane is regulated by cellular zinc status. Recruitment to the plasma membrane from an internal pool is stimulated by zinc while in absence of zinc the plasma membrane pool is endocytosed and degraded (By similarity). Localizes to the basolateral surface of enterocytes (PubMed:24951051). Localizes to zinc-containing intracellular vesicles in macrophages (By similarity). Localizes in the cytoplasm and to the ER, Golgi and nucleus membranes in keratinocytes (By similarity).</text>
</comment>
<comment type="tissue specificity">
    <text evidence="5 10 11">Widely expressed (PubMed:7882967). Detected in duodenum and jejunum but not in ileum and colon (at protein level) (PubMed:9560190). Expressed by neuroglial cells (at protein level) (PubMed:15378655).</text>
</comment>
<comment type="induction">
    <text evidence="11">Slightly by zinc in the intestine, but not the liver.</text>
</comment>
<comment type="similarity">
    <text evidence="14">Belongs to the cation diffusion facilitator (CDF) transporter (TC 2.A.4) family. SLC30A subfamily.</text>
</comment>
<protein>
    <recommendedName>
        <fullName evidence="15">Proton-coupled zinc antiporter SLC30A1</fullName>
    </recommendedName>
    <alternativeName>
        <fullName evidence="17">Solute carrier family 30 member 1</fullName>
    </alternativeName>
    <alternativeName>
        <fullName evidence="13">Zinc transporter 1</fullName>
        <shortName evidence="13">ZnT-1</shortName>
    </alternativeName>
</protein>
<gene>
    <name evidence="17" type="primary">Slc30a1</name>
    <name evidence="12" type="synonym">Znt1</name>
</gene>
<keyword id="KW-0050">Antiport</keyword>
<keyword id="KW-1003">Cell membrane</keyword>
<keyword id="KW-0963">Cytoplasm</keyword>
<keyword id="KW-0968">Cytoplasmic vesicle</keyword>
<keyword id="KW-0256">Endoplasmic reticulum</keyword>
<keyword id="KW-0325">Glycoprotein</keyword>
<keyword id="KW-0333">Golgi apparatus</keyword>
<keyword id="KW-0406">Ion transport</keyword>
<keyword id="KW-0472">Membrane</keyword>
<keyword id="KW-0479">Metal-binding</keyword>
<keyword id="KW-0539">Nucleus</keyword>
<keyword id="KW-0597">Phosphoprotein</keyword>
<keyword id="KW-1185">Reference proteome</keyword>
<keyword id="KW-0677">Repeat</keyword>
<keyword id="KW-0812">Transmembrane</keyword>
<keyword id="KW-1133">Transmembrane helix</keyword>
<keyword id="KW-0813">Transport</keyword>
<keyword id="KW-0862">Zinc</keyword>
<keyword id="KW-0864">Zinc transport</keyword>
<evidence type="ECO:0000250" key="1">
    <source>
        <dbReference type="UniProtKB" id="P69380"/>
    </source>
</evidence>
<evidence type="ECO:0000250" key="2">
    <source>
        <dbReference type="UniProtKB" id="Q9Y6M5"/>
    </source>
</evidence>
<evidence type="ECO:0000255" key="3"/>
<evidence type="ECO:0000256" key="4">
    <source>
        <dbReference type="SAM" id="MobiDB-lite"/>
    </source>
</evidence>
<evidence type="ECO:0000269" key="5">
    <source>
    </source>
</evidence>
<evidence type="ECO:0000269" key="6">
    <source>
    </source>
</evidence>
<evidence type="ECO:0000269" key="7">
    <source>
    </source>
</evidence>
<evidence type="ECO:0000269" key="8">
    <source>
    </source>
</evidence>
<evidence type="ECO:0000269" key="9">
    <source>
    </source>
</evidence>
<evidence type="ECO:0000269" key="10">
    <source>
    </source>
</evidence>
<evidence type="ECO:0000269" key="11">
    <source>
    </source>
</evidence>
<evidence type="ECO:0000303" key="12">
    <source>
    </source>
</evidence>
<evidence type="ECO:0000303" key="13">
    <source>
    </source>
</evidence>
<evidence type="ECO:0000305" key="14"/>
<evidence type="ECO:0000305" key="15">
    <source>
    </source>
</evidence>
<evidence type="ECO:0000305" key="16">
    <source>
    </source>
</evidence>
<evidence type="ECO:0000312" key="17">
    <source>
        <dbReference type="RGD" id="61918"/>
    </source>
</evidence>
<name>ZNT1_RAT</name>
<feature type="chain" id="PRO_0000206093" description="Proton-coupled zinc antiporter SLC30A1">
    <location>
        <begin position="1"/>
        <end position="507"/>
    </location>
</feature>
<feature type="topological domain" description="Cytoplasmic" evidence="2">
    <location>
        <begin position="1"/>
        <end position="10"/>
    </location>
</feature>
<feature type="transmembrane region" description="Helical" evidence="3">
    <location>
        <begin position="11"/>
        <end position="31"/>
    </location>
</feature>
<feature type="topological domain" description="Extracellular" evidence="2">
    <location>
        <begin position="32"/>
        <end position="35"/>
    </location>
</feature>
<feature type="transmembrane region" description="Helical" evidence="3">
    <location>
        <begin position="36"/>
        <end position="56"/>
    </location>
</feature>
<feature type="topological domain" description="Cytoplasmic" evidence="2">
    <location>
        <begin position="57"/>
        <end position="78"/>
    </location>
</feature>
<feature type="transmembrane region" description="Helical" evidence="3">
    <location>
        <begin position="79"/>
        <end position="99"/>
    </location>
</feature>
<feature type="topological domain" description="Extracellular" evidence="2">
    <location>
        <begin position="100"/>
        <end position="113"/>
    </location>
</feature>
<feature type="transmembrane region" description="Helical" evidence="3">
    <location>
        <begin position="114"/>
        <end position="134"/>
    </location>
</feature>
<feature type="topological domain" description="Cytoplasmic" evidence="2">
    <location>
        <begin position="135"/>
        <end position="247"/>
    </location>
</feature>
<feature type="transmembrane region" description="Helical" evidence="3">
    <location>
        <begin position="248"/>
        <end position="268"/>
    </location>
</feature>
<feature type="topological domain" description="Extracellular" evidence="2">
    <location>
        <begin position="269"/>
        <end position="307"/>
    </location>
</feature>
<feature type="transmembrane region" description="Helical" evidence="3">
    <location>
        <begin position="308"/>
        <end position="328"/>
    </location>
</feature>
<feature type="topological domain" description="Cytoplasmic" evidence="2">
    <location>
        <begin position="329"/>
        <end position="507"/>
    </location>
</feature>
<feature type="region of interest" description="Disordered" evidence="4">
    <location>
        <begin position="140"/>
        <end position="218"/>
    </location>
</feature>
<feature type="region of interest" description="6 X 2 AA approximate repeats of H-G">
    <location>
        <begin position="145"/>
        <end position="156"/>
    </location>
</feature>
<feature type="compositionally biased region" description="Basic residues" evidence="4">
    <location>
        <begin position="147"/>
        <end position="165"/>
    </location>
</feature>
<feature type="compositionally biased region" description="Polar residues" evidence="4">
    <location>
        <begin position="188"/>
        <end position="200"/>
    </location>
</feature>
<feature type="compositionally biased region" description="Basic and acidic residues" evidence="4">
    <location>
        <begin position="204"/>
        <end position="215"/>
    </location>
</feature>
<feature type="binding site" evidence="9">
    <location>
        <position position="43"/>
    </location>
    <ligand>
        <name>Zn(2+)</name>
        <dbReference type="ChEBI" id="CHEBI:29105"/>
        <note>transported zinc</note>
    </ligand>
</feature>
<feature type="binding site" evidence="1">
    <location>
        <position position="47"/>
    </location>
    <ligand>
        <name>Zn(2+)</name>
        <dbReference type="ChEBI" id="CHEBI:29105"/>
        <note>transported zinc</note>
    </ligand>
</feature>
<feature type="binding site" evidence="1">
    <location>
        <position position="250"/>
    </location>
    <ligand>
        <name>Zn(2+)</name>
        <dbReference type="ChEBI" id="CHEBI:29105"/>
        <note>transported zinc</note>
    </ligand>
</feature>
<feature type="binding site" evidence="9">
    <location>
        <position position="254"/>
    </location>
    <ligand>
        <name>Zn(2+)</name>
        <dbReference type="ChEBI" id="CHEBI:29105"/>
        <note>transported zinc</note>
    </ligand>
</feature>
<feature type="modified residue" description="Phosphoserine" evidence="2">
    <location>
        <position position="506"/>
    </location>
</feature>
<feature type="glycosylation site" description="N-linked (GlcNAc...) asparagine" evidence="3">
    <location>
        <position position="298"/>
    </location>
</feature>
<feature type="mutagenesis site" description="Loss of zinc export across plasma membrane and no effect on localization to the plasma membrane; when associated with A-254." evidence="9">
    <original>H</original>
    <variation>A</variation>
    <location>
        <position position="43"/>
    </location>
</feature>
<feature type="mutagenesis site" description="Loss of zinc export across plasma membrane and no effect on localization to the plasma membrane; when associated with A-43." evidence="9">
    <original>D</original>
    <variation>A</variation>
    <location>
        <position position="254"/>
    </location>
</feature>
<organism>
    <name type="scientific">Rattus norvegicus</name>
    <name type="common">Rat</name>
    <dbReference type="NCBI Taxonomy" id="10116"/>
    <lineage>
        <taxon>Eukaryota</taxon>
        <taxon>Metazoa</taxon>
        <taxon>Chordata</taxon>
        <taxon>Craniata</taxon>
        <taxon>Vertebrata</taxon>
        <taxon>Euteleostomi</taxon>
        <taxon>Mammalia</taxon>
        <taxon>Eutheria</taxon>
        <taxon>Euarchontoglires</taxon>
        <taxon>Glires</taxon>
        <taxon>Rodentia</taxon>
        <taxon>Myomorpha</taxon>
        <taxon>Muroidea</taxon>
        <taxon>Muridae</taxon>
        <taxon>Murinae</taxon>
        <taxon>Rattus</taxon>
    </lineage>
</organism>
<reference key="1">
    <citation type="journal article" date="1995" name="EMBO J.">
        <title>Cloning and functional characterization of a mammalian zinc transporter that confers resistance to zinc.</title>
        <authorList>
            <person name="Palmiter R.D."/>
            <person name="Findley S.D."/>
        </authorList>
    </citation>
    <scope>NUCLEOTIDE SEQUENCE [MRNA]</scope>
    <scope>FUNCTION</scope>
    <scope>SUBUNIT</scope>
    <scope>SUBCELLULAR LOCATION</scope>
    <scope>TISSUE SPECIFICITY</scope>
    <source>
        <tissue>Kidney</tissue>
    </source>
</reference>
<reference key="2">
    <citation type="journal article" date="1998" name="Proc. Natl. Acad. Sci. U.S.A.">
        <title>Regulation of the zinc transporter ZnT-1 by dietary zinc.</title>
        <authorList>
            <person name="McMahon R.J."/>
            <person name="Cousins R.J."/>
        </authorList>
    </citation>
    <scope>TISSUE SPECIFICITY</scope>
    <scope>INDUCTION BY ZINC</scope>
    <source>
        <tissue>Intestine</tissue>
    </source>
</reference>
<reference key="3">
    <citation type="journal article" date="2004" name="Glia">
        <title>ZnT-1 expression in astroglial cells protects against zinc toxicity and slows the accumulation of intracellular zinc.</title>
        <authorList>
            <person name="Nolte C."/>
            <person name="Gore A."/>
            <person name="Sekler I."/>
            <person name="Kresse W."/>
            <person name="Hershfinkel M."/>
            <person name="Hoffmann A."/>
            <person name="Kettenmann H."/>
            <person name="Moran A."/>
        </authorList>
    </citation>
    <scope>FUNCTION</scope>
    <scope>TISSUE SPECIFICITY</scope>
</reference>
<reference key="4">
    <citation type="journal article" date="2006" name="J. Mol. Med.">
        <title>Silencing of ZnT-1 expression enhances heavy metal influx and toxicity.</title>
        <authorList>
            <person name="Ohana E."/>
            <person name="Sekler I."/>
            <person name="Kaisman T."/>
            <person name="Kahn N."/>
            <person name="Cove J."/>
            <person name="Silverman W.F."/>
            <person name="Amsterdam A."/>
            <person name="Hershfinkel M."/>
        </authorList>
    </citation>
    <scope>FUNCTION</scope>
</reference>
<reference key="5">
    <citation type="journal article" date="2009" name="J. Biol. Chem.">
        <title>Molecular basis for zinc transporter 1 action as an endogenous inhibitor of L-type calcium channels.</title>
        <authorList>
            <person name="Levy S."/>
            <person name="Beharier O."/>
            <person name="Etzion Y."/>
            <person name="Mor M."/>
            <person name="Buzaglo L."/>
            <person name="Shaltiel L."/>
            <person name="Gheber L.A."/>
            <person name="Kahn J."/>
            <person name="Muslin A.J."/>
            <person name="Katz A."/>
            <person name="Gitler D."/>
            <person name="Moran A."/>
        </authorList>
    </citation>
    <scope>FUNCTION</scope>
</reference>
<reference key="6">
    <citation type="journal article" date="2009" name="Neurosci. Lett.">
        <title>Silencing of ZnT1 reduces Zn2+ efflux in cultured cortical neurons.</title>
        <authorList>
            <person name="Qin Y."/>
            <person name="Thomas D."/>
            <person name="Fontaine C.P."/>
            <person name="Colvin R.A."/>
        </authorList>
    </citation>
    <scope>FUNCTION</scope>
</reference>
<reference key="7">
    <citation type="journal article" date="2014" name="Metallomics">
        <title>ZnT-1 extrudes zinc from mammalian cells functioning as a Zn(2+)/H(+) exchanger.</title>
        <authorList>
            <person name="Shusterman E."/>
            <person name="Beharier O."/>
            <person name="Shiri L."/>
            <person name="Zarivach R."/>
            <person name="Etzion Y."/>
            <person name="Campbell C.R."/>
            <person name="Lee I.H."/>
            <person name="Okabayashi K."/>
            <person name="Dinudom A."/>
            <person name="Cook D.I."/>
            <person name="Katz A."/>
            <person name="Moran A."/>
        </authorList>
    </citation>
    <scope>FUNCTION</scope>
    <scope>CATALYTIC ACTIVITY</scope>
    <scope>ACTIVITY REGULATION</scope>
    <scope>SUBCELLULAR LOCATION</scope>
    <scope>MUTAGENESIS OF HIS-43 AND ASP-254</scope>
    <scope>ZINC BINDING</scope>
</reference>
<proteinExistence type="evidence at protein level"/>
<dbReference type="EMBL" id="U17133">
    <property type="protein sequence ID" value="AAA79234.1"/>
    <property type="molecule type" value="mRNA"/>
</dbReference>
<dbReference type="PIR" id="S54303">
    <property type="entry name" value="S54303"/>
</dbReference>
<dbReference type="RefSeq" id="NP_074044.1">
    <property type="nucleotide sequence ID" value="NM_022853.2"/>
</dbReference>
<dbReference type="SMR" id="Q62720"/>
<dbReference type="FunCoup" id="Q62720">
    <property type="interactions" value="2442"/>
</dbReference>
<dbReference type="IntAct" id="Q62720">
    <property type="interactions" value="2"/>
</dbReference>
<dbReference type="STRING" id="10116.ENSRNOP00000006340"/>
<dbReference type="TCDB" id="2.A.4.2.3">
    <property type="family name" value="the cation diffusion facilitator (cdf) family"/>
</dbReference>
<dbReference type="GlyCosmos" id="Q62720">
    <property type="glycosylation" value="1 site, No reported glycans"/>
</dbReference>
<dbReference type="GlyGen" id="Q62720">
    <property type="glycosylation" value="1 site"/>
</dbReference>
<dbReference type="iPTMnet" id="Q62720"/>
<dbReference type="PhosphoSitePlus" id="Q62720"/>
<dbReference type="SwissPalm" id="Q62720"/>
<dbReference type="PaxDb" id="10116-ENSRNOP00000006340"/>
<dbReference type="Ensembl" id="ENSRNOT00000006340.5">
    <property type="protein sequence ID" value="ENSRNOP00000006340.2"/>
    <property type="gene ID" value="ENSRNOG00000004749.5"/>
</dbReference>
<dbReference type="GeneID" id="58976"/>
<dbReference type="KEGG" id="rno:58976"/>
<dbReference type="AGR" id="RGD:61918"/>
<dbReference type="CTD" id="7779"/>
<dbReference type="RGD" id="61918">
    <property type="gene designation" value="Slc30a1"/>
</dbReference>
<dbReference type="eggNOG" id="KOG1483">
    <property type="taxonomic scope" value="Eukaryota"/>
</dbReference>
<dbReference type="GeneTree" id="ENSGT00940000156484"/>
<dbReference type="HOGENOM" id="CLU_013430_4_3_1"/>
<dbReference type="InParanoid" id="Q62720"/>
<dbReference type="OMA" id="CLFHQHG"/>
<dbReference type="OrthoDB" id="29444at2759"/>
<dbReference type="PhylomeDB" id="Q62720"/>
<dbReference type="TreeFam" id="TF313924"/>
<dbReference type="Reactome" id="R-RNO-435368">
    <property type="pathway name" value="Zinc efflux and compartmentalization by the SLC30 family"/>
</dbReference>
<dbReference type="PRO" id="PR:Q62720"/>
<dbReference type="Proteomes" id="UP000002494">
    <property type="component" value="Chromosome 13"/>
</dbReference>
<dbReference type="Bgee" id="ENSRNOG00000004749">
    <property type="expression patterns" value="Expressed in liver and 18 other cell types or tissues"/>
</dbReference>
<dbReference type="GO" id="GO:0016323">
    <property type="term" value="C:basolateral plasma membrane"/>
    <property type="evidence" value="ECO:0000250"/>
    <property type="project" value="UniProtKB"/>
</dbReference>
<dbReference type="GO" id="GO:0005737">
    <property type="term" value="C:cytoplasm"/>
    <property type="evidence" value="ECO:0000266"/>
    <property type="project" value="RGD"/>
</dbReference>
<dbReference type="GO" id="GO:0030659">
    <property type="term" value="C:cytoplasmic vesicle membrane"/>
    <property type="evidence" value="ECO:0000250"/>
    <property type="project" value="UniProtKB"/>
</dbReference>
<dbReference type="GO" id="GO:0030425">
    <property type="term" value="C:dendrite"/>
    <property type="evidence" value="ECO:0000314"/>
    <property type="project" value="RGD"/>
</dbReference>
<dbReference type="GO" id="GO:0005783">
    <property type="term" value="C:endoplasmic reticulum"/>
    <property type="evidence" value="ECO:0000266"/>
    <property type="project" value="RGD"/>
</dbReference>
<dbReference type="GO" id="GO:0005789">
    <property type="term" value="C:endoplasmic reticulum membrane"/>
    <property type="evidence" value="ECO:0007669"/>
    <property type="project" value="UniProtKB-SubCell"/>
</dbReference>
<dbReference type="GO" id="GO:0099573">
    <property type="term" value="C:glutamatergic postsynaptic density"/>
    <property type="evidence" value="ECO:0000314"/>
    <property type="project" value="RGD"/>
</dbReference>
<dbReference type="GO" id="GO:0005794">
    <property type="term" value="C:Golgi apparatus"/>
    <property type="evidence" value="ECO:0000266"/>
    <property type="project" value="RGD"/>
</dbReference>
<dbReference type="GO" id="GO:0000139">
    <property type="term" value="C:Golgi membrane"/>
    <property type="evidence" value="ECO:0007669"/>
    <property type="project" value="UniProtKB-SubCell"/>
</dbReference>
<dbReference type="GO" id="GO:0016020">
    <property type="term" value="C:membrane"/>
    <property type="evidence" value="ECO:0000318"/>
    <property type="project" value="GO_Central"/>
</dbReference>
<dbReference type="GO" id="GO:0031965">
    <property type="term" value="C:nuclear membrane"/>
    <property type="evidence" value="ECO:0000266"/>
    <property type="project" value="RGD"/>
</dbReference>
<dbReference type="GO" id="GO:0005886">
    <property type="term" value="C:plasma membrane"/>
    <property type="evidence" value="ECO:0000314"/>
    <property type="project" value="UniProtKB"/>
</dbReference>
<dbReference type="GO" id="GO:0098839">
    <property type="term" value="C:postsynaptic density membrane"/>
    <property type="evidence" value="ECO:0000314"/>
    <property type="project" value="SynGO"/>
</dbReference>
<dbReference type="GO" id="GO:0099092">
    <property type="term" value="C:postsynaptic density, intracellular component"/>
    <property type="evidence" value="ECO:0000314"/>
    <property type="project" value="RGD"/>
</dbReference>
<dbReference type="GO" id="GO:0098685">
    <property type="term" value="C:Schaffer collateral - CA1 synapse"/>
    <property type="evidence" value="ECO:0000314"/>
    <property type="project" value="SynGO"/>
</dbReference>
<dbReference type="GO" id="GO:0030315">
    <property type="term" value="C:T-tubule"/>
    <property type="evidence" value="ECO:0000314"/>
    <property type="project" value="BHF-UCL"/>
</dbReference>
<dbReference type="GO" id="GO:0019855">
    <property type="term" value="F:calcium channel inhibitor activity"/>
    <property type="evidence" value="ECO:0000315"/>
    <property type="project" value="BHF-UCL"/>
</dbReference>
<dbReference type="GO" id="GO:0046872">
    <property type="term" value="F:metal ion binding"/>
    <property type="evidence" value="ECO:0007669"/>
    <property type="project" value="UniProtKB-KW"/>
</dbReference>
<dbReference type="GO" id="GO:0005385">
    <property type="term" value="F:zinc ion transmembrane transporter activity"/>
    <property type="evidence" value="ECO:0000314"/>
    <property type="project" value="BHF-UCL"/>
</dbReference>
<dbReference type="GO" id="GO:0140826">
    <property type="term" value="F:zinc:proton antiporter activity"/>
    <property type="evidence" value="ECO:0000314"/>
    <property type="project" value="UniProtKB"/>
</dbReference>
<dbReference type="GO" id="GO:0070574">
    <property type="term" value="P:cadmium ion transmembrane transport"/>
    <property type="evidence" value="ECO:0000315"/>
    <property type="project" value="BHF-UCL"/>
</dbReference>
<dbReference type="GO" id="GO:0070509">
    <property type="term" value="P:calcium ion import"/>
    <property type="evidence" value="ECO:0000315"/>
    <property type="project" value="BHF-UCL"/>
</dbReference>
<dbReference type="GO" id="GO:0042742">
    <property type="term" value="P:defense response to bacterium"/>
    <property type="evidence" value="ECO:0000250"/>
    <property type="project" value="UniProtKB"/>
</dbReference>
<dbReference type="GO" id="GO:0071585">
    <property type="term" value="P:detoxification of cadmium ion"/>
    <property type="evidence" value="ECO:0000315"/>
    <property type="project" value="BHF-UCL"/>
</dbReference>
<dbReference type="GO" id="GO:0010312">
    <property type="term" value="P:detoxification of zinc ion"/>
    <property type="evidence" value="ECO:0000318"/>
    <property type="project" value="GO_Central"/>
</dbReference>
<dbReference type="GO" id="GO:0001701">
    <property type="term" value="P:in utero embryonic development"/>
    <property type="evidence" value="ECO:0000266"/>
    <property type="project" value="RGD"/>
</dbReference>
<dbReference type="GO" id="GO:0006874">
    <property type="term" value="P:intracellular calcium ion homeostasis"/>
    <property type="evidence" value="ECO:0000266"/>
    <property type="project" value="RGD"/>
</dbReference>
<dbReference type="GO" id="GO:0006882">
    <property type="term" value="P:intracellular zinc ion homeostasis"/>
    <property type="evidence" value="ECO:0000250"/>
    <property type="project" value="UniProtKB"/>
</dbReference>
<dbReference type="GO" id="GO:0090281">
    <property type="term" value="P:negative regulation of calcium ion import"/>
    <property type="evidence" value="ECO:0000266"/>
    <property type="project" value="RGD"/>
</dbReference>
<dbReference type="GO" id="GO:0046929">
    <property type="term" value="P:negative regulation of neurotransmitter secretion"/>
    <property type="evidence" value="ECO:0000315"/>
    <property type="project" value="BHF-UCL"/>
</dbReference>
<dbReference type="GO" id="GO:0071584">
    <property type="term" value="P:negative regulation of zinc ion transmembrane import"/>
    <property type="evidence" value="ECO:0000266"/>
    <property type="project" value="RGD"/>
</dbReference>
<dbReference type="GO" id="GO:0061003">
    <property type="term" value="P:positive regulation of dendritic spine morphogenesis"/>
    <property type="evidence" value="ECO:0000315"/>
    <property type="project" value="RGD"/>
</dbReference>
<dbReference type="GO" id="GO:1902897">
    <property type="term" value="P:regulation of postsynaptic density protein 95 clustering"/>
    <property type="evidence" value="ECO:0000315"/>
    <property type="project" value="RGD"/>
</dbReference>
<dbReference type="GO" id="GO:0140882">
    <property type="term" value="P:zinc export across plasma membrane"/>
    <property type="evidence" value="ECO:0000314"/>
    <property type="project" value="UniProtKB"/>
</dbReference>
<dbReference type="GO" id="GO:0062111">
    <property type="term" value="P:zinc ion import into organelle"/>
    <property type="evidence" value="ECO:0000250"/>
    <property type="project" value="UniProtKB"/>
</dbReference>
<dbReference type="GO" id="GO:0071577">
    <property type="term" value="P:zinc ion transmembrane transport"/>
    <property type="evidence" value="ECO:0000318"/>
    <property type="project" value="GO_Central"/>
</dbReference>
<dbReference type="GO" id="GO:0006829">
    <property type="term" value="P:zinc ion transport"/>
    <property type="evidence" value="ECO:0000314"/>
    <property type="project" value="MGI"/>
</dbReference>
<dbReference type="Gene3D" id="1.20.1510.10">
    <property type="entry name" value="Cation efflux protein transmembrane domain"/>
    <property type="match status" value="1"/>
</dbReference>
<dbReference type="InterPro" id="IPR002524">
    <property type="entry name" value="Cation_efflux"/>
</dbReference>
<dbReference type="InterPro" id="IPR036837">
    <property type="entry name" value="Cation_efflux_CTD_sf"/>
</dbReference>
<dbReference type="InterPro" id="IPR027469">
    <property type="entry name" value="Cation_efflux_TMD_sf"/>
</dbReference>
<dbReference type="NCBIfam" id="TIGR01297">
    <property type="entry name" value="CDF"/>
    <property type="match status" value="1"/>
</dbReference>
<dbReference type="PANTHER" id="PTHR45820">
    <property type="entry name" value="FI23527P1"/>
    <property type="match status" value="1"/>
</dbReference>
<dbReference type="PANTHER" id="PTHR45820:SF1">
    <property type="entry name" value="PROTON-COUPLED ZINC ANTIPORTER SLC30A1"/>
    <property type="match status" value="1"/>
</dbReference>
<dbReference type="Pfam" id="PF01545">
    <property type="entry name" value="Cation_efflux"/>
    <property type="match status" value="1"/>
</dbReference>
<dbReference type="SUPFAM" id="SSF160240">
    <property type="entry name" value="Cation efflux protein cytoplasmic domain-like"/>
    <property type="match status" value="1"/>
</dbReference>
<dbReference type="SUPFAM" id="SSF161111">
    <property type="entry name" value="Cation efflux protein transmembrane domain-like"/>
    <property type="match status" value="1"/>
</dbReference>